<evidence type="ECO:0000255" key="1">
    <source>
        <dbReference type="HAMAP-Rule" id="MF_00095"/>
    </source>
</evidence>
<feature type="chain" id="PRO_0000340169" description="Sugar fermentation stimulation protein homolog">
    <location>
        <begin position="1"/>
        <end position="247"/>
    </location>
</feature>
<reference key="1">
    <citation type="journal article" date="2009" name="ISME J.">
        <title>The genome sequence of the psychrophilic archaeon, Methanococcoides burtonii: the role of genome evolution in cold adaptation.</title>
        <authorList>
            <person name="Allen M.A."/>
            <person name="Lauro F.M."/>
            <person name="Williams T.J."/>
            <person name="Burg D."/>
            <person name="Siddiqui K.S."/>
            <person name="De Francisci D."/>
            <person name="Chong K.W."/>
            <person name="Pilak O."/>
            <person name="Chew H.H."/>
            <person name="De Maere M.Z."/>
            <person name="Ting L."/>
            <person name="Katrib M."/>
            <person name="Ng C."/>
            <person name="Sowers K.R."/>
            <person name="Galperin M.Y."/>
            <person name="Anderson I.J."/>
            <person name="Ivanova N."/>
            <person name="Dalin E."/>
            <person name="Martinez M."/>
            <person name="Lapidus A."/>
            <person name="Hauser L."/>
            <person name="Land M."/>
            <person name="Thomas T."/>
            <person name="Cavicchioli R."/>
        </authorList>
    </citation>
    <scope>NUCLEOTIDE SEQUENCE [LARGE SCALE GENOMIC DNA]</scope>
    <source>
        <strain>DSM 6242 / NBRC 107633 / OCM 468 / ACE-M</strain>
    </source>
</reference>
<sequence>MVRNDLVMEIPWDIEATLLSRPNRFLGIVEMDESTSSGPFQEKVHIHDPGRLEDLLYPGNRLLLRKATNPKRKTGWDVIAAKADDGWILINSIFHRRIAEWAIANKVCSCFENVLEVIPEQKFGDSRLDFLLKKSDTELWVEVKGCTLIYGNTATFPDAPTTRGKRHVGELKKALESGSEALILIIILRKDALCFKANASIDPDFAEVFKDAVNAGVQVCPLVFGYEGRELFYKGMVPLCTEEYNSI</sequence>
<comment type="similarity">
    <text evidence="1">Belongs to the SfsA family.</text>
</comment>
<organism>
    <name type="scientific">Methanococcoides burtonii (strain DSM 6242 / NBRC 107633 / OCM 468 / ACE-M)</name>
    <dbReference type="NCBI Taxonomy" id="259564"/>
    <lineage>
        <taxon>Archaea</taxon>
        <taxon>Methanobacteriati</taxon>
        <taxon>Methanobacteriota</taxon>
        <taxon>Stenosarchaea group</taxon>
        <taxon>Methanomicrobia</taxon>
        <taxon>Methanosarcinales</taxon>
        <taxon>Methanosarcinaceae</taxon>
        <taxon>Methanococcoides</taxon>
    </lineage>
</organism>
<protein>
    <recommendedName>
        <fullName evidence="1">Sugar fermentation stimulation protein homolog</fullName>
    </recommendedName>
</protein>
<gene>
    <name evidence="1" type="primary">sfsA</name>
    <name type="ordered locus">Mbur_0085</name>
</gene>
<proteinExistence type="inferred from homology"/>
<name>SFSA_METBU</name>
<accession>Q12ZM1</accession>
<dbReference type="EMBL" id="CP000300">
    <property type="protein sequence ID" value="ABE51105.1"/>
    <property type="molecule type" value="Genomic_DNA"/>
</dbReference>
<dbReference type="RefSeq" id="WP_011498269.1">
    <property type="nucleotide sequence ID" value="NC_007955.1"/>
</dbReference>
<dbReference type="SMR" id="Q12ZM1"/>
<dbReference type="STRING" id="259564.Mbur_0085"/>
<dbReference type="GeneID" id="3996771"/>
<dbReference type="KEGG" id="mbu:Mbur_0085"/>
<dbReference type="HOGENOM" id="CLU_052299_1_0_2"/>
<dbReference type="OrthoDB" id="34139at2157"/>
<dbReference type="Proteomes" id="UP000001979">
    <property type="component" value="Chromosome"/>
</dbReference>
<dbReference type="GO" id="GO:0003677">
    <property type="term" value="F:DNA binding"/>
    <property type="evidence" value="ECO:0007669"/>
    <property type="project" value="InterPro"/>
</dbReference>
<dbReference type="CDD" id="cd22357">
    <property type="entry name" value="SfsA-like"/>
    <property type="match status" value="1"/>
</dbReference>
<dbReference type="Gene3D" id="2.40.50.580">
    <property type="match status" value="1"/>
</dbReference>
<dbReference type="Gene3D" id="3.40.1350.60">
    <property type="match status" value="1"/>
</dbReference>
<dbReference type="HAMAP" id="MF_00095">
    <property type="entry name" value="SfsA"/>
    <property type="match status" value="1"/>
</dbReference>
<dbReference type="InterPro" id="IPR005224">
    <property type="entry name" value="SfsA"/>
</dbReference>
<dbReference type="InterPro" id="IPR040452">
    <property type="entry name" value="SfsA_C"/>
</dbReference>
<dbReference type="InterPro" id="IPR041465">
    <property type="entry name" value="SfsA_N"/>
</dbReference>
<dbReference type="NCBIfam" id="TIGR00230">
    <property type="entry name" value="sfsA"/>
    <property type="match status" value="1"/>
</dbReference>
<dbReference type="PANTHER" id="PTHR30545">
    <property type="entry name" value="SUGAR FERMENTATION STIMULATION PROTEIN A"/>
    <property type="match status" value="1"/>
</dbReference>
<dbReference type="PANTHER" id="PTHR30545:SF2">
    <property type="entry name" value="SUGAR FERMENTATION STIMULATION PROTEIN A"/>
    <property type="match status" value="1"/>
</dbReference>
<dbReference type="Pfam" id="PF03749">
    <property type="entry name" value="SfsA"/>
    <property type="match status" value="1"/>
</dbReference>
<dbReference type="Pfam" id="PF17746">
    <property type="entry name" value="SfsA_N"/>
    <property type="match status" value="1"/>
</dbReference>